<evidence type="ECO:0000255" key="1">
    <source>
        <dbReference type="HAMAP-Rule" id="MF_01343"/>
    </source>
</evidence>
<evidence type="ECO:0000305" key="2"/>
<name>RS15_AGRFC</name>
<sequence length="89" mass="10009">MSITAERKAALITEYATKAGDTGSPEVQVAILTERINNLTGHFKDHKKDNHSRRGLLTLVSSRRSLLDYLKKKDEARYTKLIGALGIRR</sequence>
<dbReference type="EMBL" id="AE007869">
    <property type="protein sequence ID" value="AAK85904.1"/>
    <property type="molecule type" value="Genomic_DNA"/>
</dbReference>
<dbReference type="PIR" id="AG2586">
    <property type="entry name" value="AG2586"/>
</dbReference>
<dbReference type="PIR" id="G97368">
    <property type="entry name" value="G97368"/>
</dbReference>
<dbReference type="RefSeq" id="NP_353119.1">
    <property type="nucleotide sequence ID" value="NC_003062.2"/>
</dbReference>
<dbReference type="RefSeq" id="WP_006309908.1">
    <property type="nucleotide sequence ID" value="NC_003062.2"/>
</dbReference>
<dbReference type="SMR" id="Q8UJ54"/>
<dbReference type="STRING" id="176299.Atu0084"/>
<dbReference type="EnsemblBacteria" id="AAK85904">
    <property type="protein sequence ID" value="AAK85904"/>
    <property type="gene ID" value="Atu0084"/>
</dbReference>
<dbReference type="GeneID" id="1132122"/>
<dbReference type="KEGG" id="atu:Atu0084"/>
<dbReference type="PATRIC" id="fig|176299.10.peg.77"/>
<dbReference type="eggNOG" id="COG0184">
    <property type="taxonomic scope" value="Bacteria"/>
</dbReference>
<dbReference type="HOGENOM" id="CLU_148518_0_0_5"/>
<dbReference type="OrthoDB" id="9799262at2"/>
<dbReference type="PhylomeDB" id="Q8UJ54"/>
<dbReference type="BioCyc" id="AGRO:ATU0084-MONOMER"/>
<dbReference type="Proteomes" id="UP000000813">
    <property type="component" value="Chromosome circular"/>
</dbReference>
<dbReference type="GO" id="GO:0022627">
    <property type="term" value="C:cytosolic small ribosomal subunit"/>
    <property type="evidence" value="ECO:0007669"/>
    <property type="project" value="TreeGrafter"/>
</dbReference>
<dbReference type="GO" id="GO:0019843">
    <property type="term" value="F:rRNA binding"/>
    <property type="evidence" value="ECO:0007669"/>
    <property type="project" value="UniProtKB-UniRule"/>
</dbReference>
<dbReference type="GO" id="GO:0003735">
    <property type="term" value="F:structural constituent of ribosome"/>
    <property type="evidence" value="ECO:0007669"/>
    <property type="project" value="InterPro"/>
</dbReference>
<dbReference type="GO" id="GO:0006412">
    <property type="term" value="P:translation"/>
    <property type="evidence" value="ECO:0007669"/>
    <property type="project" value="UniProtKB-UniRule"/>
</dbReference>
<dbReference type="CDD" id="cd00353">
    <property type="entry name" value="Ribosomal_S15p_S13e"/>
    <property type="match status" value="1"/>
</dbReference>
<dbReference type="FunFam" id="1.10.287.10:FF:000002">
    <property type="entry name" value="30S ribosomal protein S15"/>
    <property type="match status" value="1"/>
</dbReference>
<dbReference type="Gene3D" id="6.10.250.3130">
    <property type="match status" value="1"/>
</dbReference>
<dbReference type="Gene3D" id="1.10.287.10">
    <property type="entry name" value="S15/NS1, RNA-binding"/>
    <property type="match status" value="1"/>
</dbReference>
<dbReference type="HAMAP" id="MF_01343_B">
    <property type="entry name" value="Ribosomal_uS15_B"/>
    <property type="match status" value="1"/>
</dbReference>
<dbReference type="InterPro" id="IPR000589">
    <property type="entry name" value="Ribosomal_uS15"/>
</dbReference>
<dbReference type="InterPro" id="IPR005290">
    <property type="entry name" value="Ribosomal_uS15_bac-type"/>
</dbReference>
<dbReference type="InterPro" id="IPR009068">
    <property type="entry name" value="uS15_NS1_RNA-bd_sf"/>
</dbReference>
<dbReference type="NCBIfam" id="TIGR00952">
    <property type="entry name" value="S15_bact"/>
    <property type="match status" value="1"/>
</dbReference>
<dbReference type="PANTHER" id="PTHR23321">
    <property type="entry name" value="RIBOSOMAL PROTEIN S15, BACTERIAL AND ORGANELLAR"/>
    <property type="match status" value="1"/>
</dbReference>
<dbReference type="PANTHER" id="PTHR23321:SF26">
    <property type="entry name" value="SMALL RIBOSOMAL SUBUNIT PROTEIN US15M"/>
    <property type="match status" value="1"/>
</dbReference>
<dbReference type="Pfam" id="PF00312">
    <property type="entry name" value="Ribosomal_S15"/>
    <property type="match status" value="1"/>
</dbReference>
<dbReference type="SMART" id="SM01387">
    <property type="entry name" value="Ribosomal_S15"/>
    <property type="match status" value="1"/>
</dbReference>
<dbReference type="SUPFAM" id="SSF47060">
    <property type="entry name" value="S15/NS1 RNA-binding domain"/>
    <property type="match status" value="1"/>
</dbReference>
<dbReference type="PROSITE" id="PS00362">
    <property type="entry name" value="RIBOSOMAL_S15"/>
    <property type="match status" value="1"/>
</dbReference>
<gene>
    <name evidence="1" type="primary">rpsO</name>
    <name type="ordered locus">Atu0084</name>
    <name type="ORF">AGR_C_126</name>
</gene>
<keyword id="KW-1185">Reference proteome</keyword>
<keyword id="KW-0687">Ribonucleoprotein</keyword>
<keyword id="KW-0689">Ribosomal protein</keyword>
<keyword id="KW-0694">RNA-binding</keyword>
<keyword id="KW-0699">rRNA-binding</keyword>
<comment type="function">
    <text evidence="1">One of the primary rRNA binding proteins, it binds directly to 16S rRNA where it helps nucleate assembly of the platform of the 30S subunit by binding and bridging several RNA helices of the 16S rRNA.</text>
</comment>
<comment type="function">
    <text evidence="1">Forms an intersubunit bridge (bridge B4) with the 23S rRNA of the 50S subunit in the ribosome.</text>
</comment>
<comment type="subunit">
    <text evidence="1">Part of the 30S ribosomal subunit. Forms a bridge to the 50S subunit in the 70S ribosome, contacting the 23S rRNA.</text>
</comment>
<comment type="similarity">
    <text evidence="1">Belongs to the universal ribosomal protein uS15 family.</text>
</comment>
<protein>
    <recommendedName>
        <fullName evidence="1">Small ribosomal subunit protein uS15</fullName>
    </recommendedName>
    <alternativeName>
        <fullName evidence="2">30S ribosomal protein S15</fullName>
    </alternativeName>
</protein>
<proteinExistence type="inferred from homology"/>
<accession>Q8UJ54</accession>
<accession>Q7D282</accession>
<feature type="chain" id="PRO_0000115368" description="Small ribosomal subunit protein uS15">
    <location>
        <begin position="1"/>
        <end position="89"/>
    </location>
</feature>
<reference key="1">
    <citation type="journal article" date="2001" name="Science">
        <title>The genome of the natural genetic engineer Agrobacterium tumefaciens C58.</title>
        <authorList>
            <person name="Wood D.W."/>
            <person name="Setubal J.C."/>
            <person name="Kaul R."/>
            <person name="Monks D.E."/>
            <person name="Kitajima J.P."/>
            <person name="Okura V.K."/>
            <person name="Zhou Y."/>
            <person name="Chen L."/>
            <person name="Wood G.E."/>
            <person name="Almeida N.F. Jr."/>
            <person name="Woo L."/>
            <person name="Chen Y."/>
            <person name="Paulsen I.T."/>
            <person name="Eisen J.A."/>
            <person name="Karp P.D."/>
            <person name="Bovee D. Sr."/>
            <person name="Chapman P."/>
            <person name="Clendenning J."/>
            <person name="Deatherage G."/>
            <person name="Gillet W."/>
            <person name="Grant C."/>
            <person name="Kutyavin T."/>
            <person name="Levy R."/>
            <person name="Li M.-J."/>
            <person name="McClelland E."/>
            <person name="Palmieri A."/>
            <person name="Raymond C."/>
            <person name="Rouse G."/>
            <person name="Saenphimmachak C."/>
            <person name="Wu Z."/>
            <person name="Romero P."/>
            <person name="Gordon D."/>
            <person name="Zhang S."/>
            <person name="Yoo H."/>
            <person name="Tao Y."/>
            <person name="Biddle P."/>
            <person name="Jung M."/>
            <person name="Krespan W."/>
            <person name="Perry M."/>
            <person name="Gordon-Kamm B."/>
            <person name="Liao L."/>
            <person name="Kim S."/>
            <person name="Hendrick C."/>
            <person name="Zhao Z.-Y."/>
            <person name="Dolan M."/>
            <person name="Chumley F."/>
            <person name="Tingey S.V."/>
            <person name="Tomb J.-F."/>
            <person name="Gordon M.P."/>
            <person name="Olson M.V."/>
            <person name="Nester E.W."/>
        </authorList>
    </citation>
    <scope>NUCLEOTIDE SEQUENCE [LARGE SCALE GENOMIC DNA]</scope>
    <source>
        <strain>C58 / ATCC 33970</strain>
    </source>
</reference>
<reference key="2">
    <citation type="journal article" date="2001" name="Science">
        <title>Genome sequence of the plant pathogen and biotechnology agent Agrobacterium tumefaciens C58.</title>
        <authorList>
            <person name="Goodner B."/>
            <person name="Hinkle G."/>
            <person name="Gattung S."/>
            <person name="Miller N."/>
            <person name="Blanchard M."/>
            <person name="Qurollo B."/>
            <person name="Goldman B.S."/>
            <person name="Cao Y."/>
            <person name="Askenazi M."/>
            <person name="Halling C."/>
            <person name="Mullin L."/>
            <person name="Houmiel K."/>
            <person name="Gordon J."/>
            <person name="Vaudin M."/>
            <person name="Iartchouk O."/>
            <person name="Epp A."/>
            <person name="Liu F."/>
            <person name="Wollam C."/>
            <person name="Allinger M."/>
            <person name="Doughty D."/>
            <person name="Scott C."/>
            <person name="Lappas C."/>
            <person name="Markelz B."/>
            <person name="Flanagan C."/>
            <person name="Crowell C."/>
            <person name="Gurson J."/>
            <person name="Lomo C."/>
            <person name="Sear C."/>
            <person name="Strub G."/>
            <person name="Cielo C."/>
            <person name="Slater S."/>
        </authorList>
    </citation>
    <scope>NUCLEOTIDE SEQUENCE [LARGE SCALE GENOMIC DNA]</scope>
    <source>
        <strain>C58 / ATCC 33970</strain>
    </source>
</reference>
<organism>
    <name type="scientific">Agrobacterium fabrum (strain C58 / ATCC 33970)</name>
    <name type="common">Agrobacterium tumefaciens (strain C58)</name>
    <dbReference type="NCBI Taxonomy" id="176299"/>
    <lineage>
        <taxon>Bacteria</taxon>
        <taxon>Pseudomonadati</taxon>
        <taxon>Pseudomonadota</taxon>
        <taxon>Alphaproteobacteria</taxon>
        <taxon>Hyphomicrobiales</taxon>
        <taxon>Rhizobiaceae</taxon>
        <taxon>Rhizobium/Agrobacterium group</taxon>
        <taxon>Agrobacterium</taxon>
        <taxon>Agrobacterium tumefaciens complex</taxon>
    </lineage>
</organism>